<evidence type="ECO:0000255" key="1">
    <source>
        <dbReference type="HAMAP-Rule" id="MF_00123"/>
    </source>
</evidence>
<organism>
    <name type="scientific">Escherichia coli O17:K52:H18 (strain UMN026 / ExPEC)</name>
    <dbReference type="NCBI Taxonomy" id="585056"/>
    <lineage>
        <taxon>Bacteria</taxon>
        <taxon>Pseudomonadati</taxon>
        <taxon>Pseudomonadota</taxon>
        <taxon>Gammaproteobacteria</taxon>
        <taxon>Enterobacterales</taxon>
        <taxon>Enterobacteriaceae</taxon>
        <taxon>Escherichia</taxon>
    </lineage>
</organism>
<sequence length="577" mass="64669">MNIQALLSEKVRQAMIAAGAPADCEPQVRQSAKVQFGDYQANGMMAVAKKLGMAPRQLAEQVLTHLDLNGIASKVEIAGPGFINIFLDPAFLADHVQQALASDRLGVATPEKQTIVVDYSAPNVAKEMHVGHLRSTIIGDAAVRTLEFLGHKVIRANHVGDWGTQFGMLIAWLEKQQQENAGEMELADLEGFYRDAKKHYDEDEEFAERARNYVVKLQSGDEYFREMWRKLVDITMTQNQITYDRLNVTLTRDDVMGESLYNPMLPGIVADLKAKGLAVESEGATVVFLDEFKNKEGEPMGVIIQKKDGGYLYTTTDIACAKYRYETLHADRVLYYIDSRQHQHLMQAWAIVRKAGYVPESVPLEHHMFGMMLGKDGKPFKTRAGGTVKLADLLDEALERARRLVAEKNPDMPADELEKLANAVGIGAVKYADLSKNRTTDYIFDWDNMLAFEGNTAPYMQYAYTRVLSVFRKAEIDEEQLAAAPVIIREDREAQLAARLLQFEETLTVVAREGTPHVMCAYLYDLAGLFSGFYEHCPILSAENEEVRNSRLKLAQLTAKTLKLGLDTLGIETVERM</sequence>
<protein>
    <recommendedName>
        <fullName evidence="1">Arginine--tRNA ligase</fullName>
        <ecNumber evidence="1">6.1.1.19</ecNumber>
    </recommendedName>
    <alternativeName>
        <fullName evidence="1">Arginyl-tRNA synthetase</fullName>
        <shortName evidence="1">ArgRS</shortName>
    </alternativeName>
</protein>
<accession>B7NBM7</accession>
<dbReference type="EC" id="6.1.1.19" evidence="1"/>
<dbReference type="EMBL" id="CU928163">
    <property type="protein sequence ID" value="CAR13367.1"/>
    <property type="molecule type" value="Genomic_DNA"/>
</dbReference>
<dbReference type="RefSeq" id="WP_001025308.1">
    <property type="nucleotide sequence ID" value="NC_011751.1"/>
</dbReference>
<dbReference type="RefSeq" id="YP_002412896.1">
    <property type="nucleotide sequence ID" value="NC_011751.1"/>
</dbReference>
<dbReference type="SMR" id="B7NBM7"/>
<dbReference type="STRING" id="585056.ECUMN_2174"/>
<dbReference type="KEGG" id="eum:ECUMN_2174"/>
<dbReference type="PATRIC" id="fig|585056.7.peg.2359"/>
<dbReference type="HOGENOM" id="CLU_006406_5_1_6"/>
<dbReference type="Proteomes" id="UP000007097">
    <property type="component" value="Chromosome"/>
</dbReference>
<dbReference type="GO" id="GO:0005737">
    <property type="term" value="C:cytoplasm"/>
    <property type="evidence" value="ECO:0007669"/>
    <property type="project" value="UniProtKB-SubCell"/>
</dbReference>
<dbReference type="GO" id="GO:0004814">
    <property type="term" value="F:arginine-tRNA ligase activity"/>
    <property type="evidence" value="ECO:0007669"/>
    <property type="project" value="UniProtKB-UniRule"/>
</dbReference>
<dbReference type="GO" id="GO:0005524">
    <property type="term" value="F:ATP binding"/>
    <property type="evidence" value="ECO:0007669"/>
    <property type="project" value="UniProtKB-UniRule"/>
</dbReference>
<dbReference type="GO" id="GO:0006420">
    <property type="term" value="P:arginyl-tRNA aminoacylation"/>
    <property type="evidence" value="ECO:0007669"/>
    <property type="project" value="UniProtKB-UniRule"/>
</dbReference>
<dbReference type="CDD" id="cd07956">
    <property type="entry name" value="Anticodon_Ia_Arg"/>
    <property type="match status" value="1"/>
</dbReference>
<dbReference type="CDD" id="cd00671">
    <property type="entry name" value="ArgRS_core"/>
    <property type="match status" value="1"/>
</dbReference>
<dbReference type="FunFam" id="1.10.730.10:FF:000001">
    <property type="entry name" value="Arginine--tRNA ligase"/>
    <property type="match status" value="1"/>
</dbReference>
<dbReference type="FunFam" id="3.30.1360.70:FF:000001">
    <property type="entry name" value="Arginine--tRNA ligase"/>
    <property type="match status" value="1"/>
</dbReference>
<dbReference type="FunFam" id="3.40.50.620:FF:000030">
    <property type="entry name" value="Arginine--tRNA ligase"/>
    <property type="match status" value="1"/>
</dbReference>
<dbReference type="Gene3D" id="3.30.1360.70">
    <property type="entry name" value="Arginyl tRNA synthetase N-terminal domain"/>
    <property type="match status" value="1"/>
</dbReference>
<dbReference type="Gene3D" id="3.40.50.620">
    <property type="entry name" value="HUPs"/>
    <property type="match status" value="1"/>
</dbReference>
<dbReference type="Gene3D" id="1.10.730.10">
    <property type="entry name" value="Isoleucyl-tRNA Synthetase, Domain 1"/>
    <property type="match status" value="1"/>
</dbReference>
<dbReference type="HAMAP" id="MF_00123">
    <property type="entry name" value="Arg_tRNA_synth"/>
    <property type="match status" value="1"/>
</dbReference>
<dbReference type="InterPro" id="IPR001412">
    <property type="entry name" value="aa-tRNA-synth_I_CS"/>
</dbReference>
<dbReference type="InterPro" id="IPR001278">
    <property type="entry name" value="Arg-tRNA-ligase"/>
</dbReference>
<dbReference type="InterPro" id="IPR005148">
    <property type="entry name" value="Arg-tRNA-synth_N"/>
</dbReference>
<dbReference type="InterPro" id="IPR036695">
    <property type="entry name" value="Arg-tRNA-synth_N_sf"/>
</dbReference>
<dbReference type="InterPro" id="IPR035684">
    <property type="entry name" value="ArgRS_core"/>
</dbReference>
<dbReference type="InterPro" id="IPR008909">
    <property type="entry name" value="DALR_anticod-bd"/>
</dbReference>
<dbReference type="InterPro" id="IPR014729">
    <property type="entry name" value="Rossmann-like_a/b/a_fold"/>
</dbReference>
<dbReference type="InterPro" id="IPR009080">
    <property type="entry name" value="tRNAsynth_Ia_anticodon-bd"/>
</dbReference>
<dbReference type="NCBIfam" id="TIGR00456">
    <property type="entry name" value="argS"/>
    <property type="match status" value="1"/>
</dbReference>
<dbReference type="PANTHER" id="PTHR11956:SF5">
    <property type="entry name" value="ARGININE--TRNA LIGASE, CYTOPLASMIC"/>
    <property type="match status" value="1"/>
</dbReference>
<dbReference type="PANTHER" id="PTHR11956">
    <property type="entry name" value="ARGINYL-TRNA SYNTHETASE"/>
    <property type="match status" value="1"/>
</dbReference>
<dbReference type="Pfam" id="PF03485">
    <property type="entry name" value="Arg_tRNA_synt_N"/>
    <property type="match status" value="1"/>
</dbReference>
<dbReference type="Pfam" id="PF05746">
    <property type="entry name" value="DALR_1"/>
    <property type="match status" value="1"/>
</dbReference>
<dbReference type="Pfam" id="PF00750">
    <property type="entry name" value="tRNA-synt_1d"/>
    <property type="match status" value="1"/>
</dbReference>
<dbReference type="PRINTS" id="PR01038">
    <property type="entry name" value="TRNASYNTHARG"/>
</dbReference>
<dbReference type="SMART" id="SM01016">
    <property type="entry name" value="Arg_tRNA_synt_N"/>
    <property type="match status" value="1"/>
</dbReference>
<dbReference type="SMART" id="SM00836">
    <property type="entry name" value="DALR_1"/>
    <property type="match status" value="1"/>
</dbReference>
<dbReference type="SUPFAM" id="SSF47323">
    <property type="entry name" value="Anticodon-binding domain of a subclass of class I aminoacyl-tRNA synthetases"/>
    <property type="match status" value="1"/>
</dbReference>
<dbReference type="SUPFAM" id="SSF55190">
    <property type="entry name" value="Arginyl-tRNA synthetase (ArgRS), N-terminal 'additional' domain"/>
    <property type="match status" value="1"/>
</dbReference>
<dbReference type="SUPFAM" id="SSF52374">
    <property type="entry name" value="Nucleotidylyl transferase"/>
    <property type="match status" value="1"/>
</dbReference>
<dbReference type="PROSITE" id="PS00178">
    <property type="entry name" value="AA_TRNA_LIGASE_I"/>
    <property type="match status" value="1"/>
</dbReference>
<reference key="1">
    <citation type="journal article" date="2009" name="PLoS Genet.">
        <title>Organised genome dynamics in the Escherichia coli species results in highly diverse adaptive paths.</title>
        <authorList>
            <person name="Touchon M."/>
            <person name="Hoede C."/>
            <person name="Tenaillon O."/>
            <person name="Barbe V."/>
            <person name="Baeriswyl S."/>
            <person name="Bidet P."/>
            <person name="Bingen E."/>
            <person name="Bonacorsi S."/>
            <person name="Bouchier C."/>
            <person name="Bouvet O."/>
            <person name="Calteau A."/>
            <person name="Chiapello H."/>
            <person name="Clermont O."/>
            <person name="Cruveiller S."/>
            <person name="Danchin A."/>
            <person name="Diard M."/>
            <person name="Dossat C."/>
            <person name="Karoui M.E."/>
            <person name="Frapy E."/>
            <person name="Garry L."/>
            <person name="Ghigo J.M."/>
            <person name="Gilles A.M."/>
            <person name="Johnson J."/>
            <person name="Le Bouguenec C."/>
            <person name="Lescat M."/>
            <person name="Mangenot S."/>
            <person name="Martinez-Jehanne V."/>
            <person name="Matic I."/>
            <person name="Nassif X."/>
            <person name="Oztas S."/>
            <person name="Petit M.A."/>
            <person name="Pichon C."/>
            <person name="Rouy Z."/>
            <person name="Ruf C.S."/>
            <person name="Schneider D."/>
            <person name="Tourret J."/>
            <person name="Vacherie B."/>
            <person name="Vallenet D."/>
            <person name="Medigue C."/>
            <person name="Rocha E.P.C."/>
            <person name="Denamur E."/>
        </authorList>
    </citation>
    <scope>NUCLEOTIDE SEQUENCE [LARGE SCALE GENOMIC DNA]</scope>
    <source>
        <strain>UMN026 / ExPEC</strain>
    </source>
</reference>
<comment type="catalytic activity">
    <reaction evidence="1">
        <text>tRNA(Arg) + L-arginine + ATP = L-arginyl-tRNA(Arg) + AMP + diphosphate</text>
        <dbReference type="Rhea" id="RHEA:20301"/>
        <dbReference type="Rhea" id="RHEA-COMP:9658"/>
        <dbReference type="Rhea" id="RHEA-COMP:9673"/>
        <dbReference type="ChEBI" id="CHEBI:30616"/>
        <dbReference type="ChEBI" id="CHEBI:32682"/>
        <dbReference type="ChEBI" id="CHEBI:33019"/>
        <dbReference type="ChEBI" id="CHEBI:78442"/>
        <dbReference type="ChEBI" id="CHEBI:78513"/>
        <dbReference type="ChEBI" id="CHEBI:456215"/>
        <dbReference type="EC" id="6.1.1.19"/>
    </reaction>
</comment>
<comment type="subunit">
    <text evidence="1">Monomer.</text>
</comment>
<comment type="subcellular location">
    <subcellularLocation>
        <location evidence="1">Cytoplasm</location>
    </subcellularLocation>
</comment>
<comment type="similarity">
    <text evidence="1">Belongs to the class-I aminoacyl-tRNA synthetase family.</text>
</comment>
<feature type="chain" id="PRO_1000198904" description="Arginine--tRNA ligase">
    <location>
        <begin position="1"/>
        <end position="577"/>
    </location>
</feature>
<feature type="short sequence motif" description="'HIGH' region">
    <location>
        <begin position="122"/>
        <end position="132"/>
    </location>
</feature>
<gene>
    <name evidence="1" type="primary">argS</name>
    <name type="ordered locus">ECUMN_2174</name>
</gene>
<proteinExistence type="inferred from homology"/>
<keyword id="KW-0030">Aminoacyl-tRNA synthetase</keyword>
<keyword id="KW-0067">ATP-binding</keyword>
<keyword id="KW-0963">Cytoplasm</keyword>
<keyword id="KW-0436">Ligase</keyword>
<keyword id="KW-0547">Nucleotide-binding</keyword>
<keyword id="KW-0648">Protein biosynthesis</keyword>
<name>SYR_ECOLU</name>